<evidence type="ECO:0000250" key="1"/>
<evidence type="ECO:0000255" key="2">
    <source>
        <dbReference type="PROSITE-ProRule" id="PRU00981"/>
    </source>
</evidence>
<evidence type="ECO:0000256" key="3">
    <source>
        <dbReference type="SAM" id="MobiDB-lite"/>
    </source>
</evidence>
<evidence type="ECO:0000269" key="4">
    <source>
    </source>
</evidence>
<evidence type="ECO:0000269" key="5">
    <source>
    </source>
</evidence>
<evidence type="ECO:0000269" key="6">
    <source>
    </source>
</evidence>
<evidence type="ECO:0000305" key="7"/>
<evidence type="ECO:0000312" key="8">
    <source>
        <dbReference type="EMBL" id="BAB27885.1"/>
    </source>
</evidence>
<reference evidence="7" key="1">
    <citation type="journal article" date="1995" name="Dev. Biol.">
        <title>Dermo-1: a novel twist-related bHLH protein expressed in the developing dermis.</title>
        <authorList>
            <person name="Li L."/>
            <person name="Cserjesi P."/>
            <person name="Olson E.N."/>
        </authorList>
    </citation>
    <scope>NUCLEOTIDE SEQUENCE [MRNA]</scope>
    <scope>FUNCTION</scope>
    <scope>TISSUE SPECIFICITY</scope>
    <scope>DEVELOPMENTAL STAGE</scope>
    <scope>SUBUNIT</scope>
    <source>
        <strain evidence="6">SWR/J</strain>
        <tissue evidence="6">Brain</tissue>
        <tissue evidence="6">Embryonic head</tissue>
    </source>
</reference>
<reference key="2">
    <citation type="journal article" date="2005" name="Science">
        <title>The transcriptional landscape of the mammalian genome.</title>
        <authorList>
            <person name="Carninci P."/>
            <person name="Kasukawa T."/>
            <person name="Katayama S."/>
            <person name="Gough J."/>
            <person name="Frith M.C."/>
            <person name="Maeda N."/>
            <person name="Oyama R."/>
            <person name="Ravasi T."/>
            <person name="Lenhard B."/>
            <person name="Wells C."/>
            <person name="Kodzius R."/>
            <person name="Shimokawa K."/>
            <person name="Bajic V.B."/>
            <person name="Brenner S.E."/>
            <person name="Batalov S."/>
            <person name="Forrest A.R."/>
            <person name="Zavolan M."/>
            <person name="Davis M.J."/>
            <person name="Wilming L.G."/>
            <person name="Aidinis V."/>
            <person name="Allen J.E."/>
            <person name="Ambesi-Impiombato A."/>
            <person name="Apweiler R."/>
            <person name="Aturaliya R.N."/>
            <person name="Bailey T.L."/>
            <person name="Bansal M."/>
            <person name="Baxter L."/>
            <person name="Beisel K.W."/>
            <person name="Bersano T."/>
            <person name="Bono H."/>
            <person name="Chalk A.M."/>
            <person name="Chiu K.P."/>
            <person name="Choudhary V."/>
            <person name="Christoffels A."/>
            <person name="Clutterbuck D.R."/>
            <person name="Crowe M.L."/>
            <person name="Dalla E."/>
            <person name="Dalrymple B.P."/>
            <person name="de Bono B."/>
            <person name="Della Gatta G."/>
            <person name="di Bernardo D."/>
            <person name="Down T."/>
            <person name="Engstrom P."/>
            <person name="Fagiolini M."/>
            <person name="Faulkner G."/>
            <person name="Fletcher C.F."/>
            <person name="Fukushima T."/>
            <person name="Furuno M."/>
            <person name="Futaki S."/>
            <person name="Gariboldi M."/>
            <person name="Georgii-Hemming P."/>
            <person name="Gingeras T.R."/>
            <person name="Gojobori T."/>
            <person name="Green R.E."/>
            <person name="Gustincich S."/>
            <person name="Harbers M."/>
            <person name="Hayashi Y."/>
            <person name="Hensch T.K."/>
            <person name="Hirokawa N."/>
            <person name="Hill D."/>
            <person name="Huminiecki L."/>
            <person name="Iacono M."/>
            <person name="Ikeo K."/>
            <person name="Iwama A."/>
            <person name="Ishikawa T."/>
            <person name="Jakt M."/>
            <person name="Kanapin A."/>
            <person name="Katoh M."/>
            <person name="Kawasawa Y."/>
            <person name="Kelso J."/>
            <person name="Kitamura H."/>
            <person name="Kitano H."/>
            <person name="Kollias G."/>
            <person name="Krishnan S.P."/>
            <person name="Kruger A."/>
            <person name="Kummerfeld S.K."/>
            <person name="Kurochkin I.V."/>
            <person name="Lareau L.F."/>
            <person name="Lazarevic D."/>
            <person name="Lipovich L."/>
            <person name="Liu J."/>
            <person name="Liuni S."/>
            <person name="McWilliam S."/>
            <person name="Madan Babu M."/>
            <person name="Madera M."/>
            <person name="Marchionni L."/>
            <person name="Matsuda H."/>
            <person name="Matsuzawa S."/>
            <person name="Miki H."/>
            <person name="Mignone F."/>
            <person name="Miyake S."/>
            <person name="Morris K."/>
            <person name="Mottagui-Tabar S."/>
            <person name="Mulder N."/>
            <person name="Nakano N."/>
            <person name="Nakauchi H."/>
            <person name="Ng P."/>
            <person name="Nilsson R."/>
            <person name="Nishiguchi S."/>
            <person name="Nishikawa S."/>
            <person name="Nori F."/>
            <person name="Ohara O."/>
            <person name="Okazaki Y."/>
            <person name="Orlando V."/>
            <person name="Pang K.C."/>
            <person name="Pavan W.J."/>
            <person name="Pavesi G."/>
            <person name="Pesole G."/>
            <person name="Petrovsky N."/>
            <person name="Piazza S."/>
            <person name="Reed J."/>
            <person name="Reid J.F."/>
            <person name="Ring B.Z."/>
            <person name="Ringwald M."/>
            <person name="Rost B."/>
            <person name="Ruan Y."/>
            <person name="Salzberg S.L."/>
            <person name="Sandelin A."/>
            <person name="Schneider C."/>
            <person name="Schoenbach C."/>
            <person name="Sekiguchi K."/>
            <person name="Semple C.A."/>
            <person name="Seno S."/>
            <person name="Sessa L."/>
            <person name="Sheng Y."/>
            <person name="Shibata Y."/>
            <person name="Shimada H."/>
            <person name="Shimada K."/>
            <person name="Silva D."/>
            <person name="Sinclair B."/>
            <person name="Sperling S."/>
            <person name="Stupka E."/>
            <person name="Sugiura K."/>
            <person name="Sultana R."/>
            <person name="Takenaka Y."/>
            <person name="Taki K."/>
            <person name="Tammoja K."/>
            <person name="Tan S.L."/>
            <person name="Tang S."/>
            <person name="Taylor M.S."/>
            <person name="Tegner J."/>
            <person name="Teichmann S.A."/>
            <person name="Ueda H.R."/>
            <person name="van Nimwegen E."/>
            <person name="Verardo R."/>
            <person name="Wei C.L."/>
            <person name="Yagi K."/>
            <person name="Yamanishi H."/>
            <person name="Zabarovsky E."/>
            <person name="Zhu S."/>
            <person name="Zimmer A."/>
            <person name="Hide W."/>
            <person name="Bult C."/>
            <person name="Grimmond S.M."/>
            <person name="Teasdale R.D."/>
            <person name="Liu E.T."/>
            <person name="Brusic V."/>
            <person name="Quackenbush J."/>
            <person name="Wahlestedt C."/>
            <person name="Mattick J.S."/>
            <person name="Hume D.A."/>
            <person name="Kai C."/>
            <person name="Sasaki D."/>
            <person name="Tomaru Y."/>
            <person name="Fukuda S."/>
            <person name="Kanamori-Katayama M."/>
            <person name="Suzuki M."/>
            <person name="Aoki J."/>
            <person name="Arakawa T."/>
            <person name="Iida J."/>
            <person name="Imamura K."/>
            <person name="Itoh M."/>
            <person name="Kato T."/>
            <person name="Kawaji H."/>
            <person name="Kawagashira N."/>
            <person name="Kawashima T."/>
            <person name="Kojima M."/>
            <person name="Kondo S."/>
            <person name="Konno H."/>
            <person name="Nakano K."/>
            <person name="Ninomiya N."/>
            <person name="Nishio T."/>
            <person name="Okada M."/>
            <person name="Plessy C."/>
            <person name="Shibata K."/>
            <person name="Shiraki T."/>
            <person name="Suzuki S."/>
            <person name="Tagami M."/>
            <person name="Waki K."/>
            <person name="Watahiki A."/>
            <person name="Okamura-Oho Y."/>
            <person name="Suzuki H."/>
            <person name="Kawai J."/>
            <person name="Hayashizaki Y."/>
        </authorList>
    </citation>
    <scope>NUCLEOTIDE SEQUENCE [LARGE SCALE MRNA]</scope>
    <source>
        <strain>C57BL/6J</strain>
        <tissue>Embryo</tissue>
    </source>
</reference>
<reference evidence="7" key="3">
    <citation type="journal article" date="2002" name="J. Biol. Chem.">
        <title>Dermo-1, a multifunctional basic helix-loop-helix protein, represses MyoD transactivation via the HLH domain, MEF2 interaction, and chromatin deacetylation.</title>
        <authorList>
            <person name="Gong X.Q."/>
            <person name="Li L."/>
        </authorList>
    </citation>
    <scope>FUNCTION</scope>
    <scope>SUBCELLULAR LOCATION</scope>
    <scope>MUTAGENESIS OF PHE-86</scope>
</reference>
<reference evidence="7" key="4">
    <citation type="journal article" date="2003" name="Cell">
        <title>Twist regulates cytokine gene expression through a negative feedback loop that represses NF-kappaB activity.</title>
        <authorList>
            <person name="Sosic D."/>
            <person name="Richardson J.A."/>
            <person name="Yu K."/>
            <person name="Ornitz D.M."/>
            <person name="Olson E.N."/>
        </authorList>
    </citation>
    <scope>FUNCTION</scope>
    <scope>INDUCTION</scope>
</reference>
<proteinExistence type="evidence at protein level"/>
<feature type="chain" id="PRO_0000127490" description="Twist-related protein 2">
    <location>
        <begin position="1"/>
        <end position="160"/>
    </location>
</feature>
<feature type="domain" description="bHLH" evidence="2">
    <location>
        <begin position="66"/>
        <end position="117"/>
    </location>
</feature>
<feature type="region of interest" description="Disordered" evidence="3">
    <location>
        <begin position="1"/>
        <end position="63"/>
    </location>
</feature>
<feature type="compositionally biased region" description="Basic residues" evidence="3">
    <location>
        <begin position="27"/>
        <end position="37"/>
    </location>
</feature>
<feature type="mutagenesis site" description="Abrogates transcriptional repression of MYOD1." evidence="4">
    <original>F</original>
    <variation>P</variation>
    <location>
        <position position="86"/>
    </location>
</feature>
<feature type="sequence conflict" description="In Ref. 2; BAB27885." evidence="7" ref="2">
    <original>Y</original>
    <variation>F</variation>
    <location>
        <position position="145"/>
    </location>
</feature>
<comment type="function">
    <text evidence="1 4 5 6">Binds to the E-box consensus sequence 5'-CANNTG-3' as a heterodimer and inhibits transcriptional activation by MYOD1, MYOG, MEF2A and MEF2C. Also represses expression of pro-inflammatory cytokines such as TNFA and IL1B. Involved in postnatal glycogen storage and energy metabolism. Inhibits the premature or ectopic differentiation of preosteoblast cells during osteogenesis, possibly by changing the internal signal transduction response of osteoblasts to external growth factors (By similarity).</text>
</comment>
<comment type="subunit">
    <text evidence="6">Efficient DNA binding requires dimerization with another bHLH protein. Forms a heterodimer with TCF3/E12. Also interacts with MEF2C.</text>
</comment>
<comment type="interaction">
    <interactant intactId="EBI-2903190">
        <id>Q9D030</id>
    </interactant>
    <interactant intactId="EBI-903354">
        <id>Q08775</id>
        <label>Runx2</label>
    </interactant>
    <organismsDiffer>false</organismsDiffer>
    <experiments>2</experiments>
</comment>
<comment type="subcellular location">
    <subcellularLocation>
        <location evidence="2 4">Nucleus</location>
    </subcellularLocation>
    <subcellularLocation>
        <location evidence="4">Cytoplasm</location>
    </subcellularLocation>
    <text>Mainly nuclear during embryonic development. Cytoplasmic in adult tissues.</text>
</comment>
<comment type="tissue specificity">
    <text evidence="6">Expressed at low levels in sclerotome and dermatome of somites, and in limb buds at 10.5 dpc. Accumulates predominantly in dermatome, prevertebrae and derivatives of branchial arches by 13 dpc. Also expressed near surface of embryo and in chondrogenic cells. In adult, expressed at low levels in skin, bladder, uterus, aorta and heart.</text>
</comment>
<comment type="developmental stage">
    <text evidence="6">In the embryo, expression is detected at 10.5 dpc, increases continuously through to 17.5 dpc and is also high in neonates. Down-regulated in adults.</text>
</comment>
<comment type="induction">
    <text evidence="5">By TNF-alpha.</text>
</comment>
<comment type="domain">
    <text evidence="4">The C-terminal and HLH domains are essential for transcriptional repression.</text>
</comment>
<name>TWST2_MOUSE</name>
<keyword id="KW-0963">Cytoplasm</keyword>
<keyword id="KW-0217">Developmental protein</keyword>
<keyword id="KW-0221">Differentiation</keyword>
<keyword id="KW-0238">DNA-binding</keyword>
<keyword id="KW-0539">Nucleus</keyword>
<keyword id="KW-1185">Reference proteome</keyword>
<keyword id="KW-0678">Repressor</keyword>
<keyword id="KW-0804">Transcription</keyword>
<keyword id="KW-0805">Transcription regulation</keyword>
<protein>
    <recommendedName>
        <fullName>Twist-related protein 2</fullName>
    </recommendedName>
    <alternativeName>
        <fullName>Dermis-expressed protein 1</fullName>
        <shortName>Dermo-1</shortName>
    </alternativeName>
</protein>
<accession>Q9D030</accession>
<sequence>MEEGSSSPVSPVDSLGTSEEELERQPKRFGRKRRYSKKSSEDGSPTPGKRGKKGSPSAQSFEELQSQRILANVRERQRTQSLNEAFAALRKIIPTLPSDKLSKIQTLKLAARYIDFLYQVLQSDEMDNKMTSCSYVAHERLSYAYSVWRMEGAWSMSASH</sequence>
<dbReference type="EMBL" id="U36384">
    <property type="protein sequence ID" value="AAC52319.1"/>
    <property type="molecule type" value="mRNA"/>
</dbReference>
<dbReference type="EMBL" id="AK011861">
    <property type="protein sequence ID" value="BAB27885.1"/>
    <property type="molecule type" value="mRNA"/>
</dbReference>
<dbReference type="EMBL" id="AK011180">
    <property type="protein sequence ID" value="BAB27450.1"/>
    <property type="molecule type" value="mRNA"/>
</dbReference>
<dbReference type="RefSeq" id="NP_031881.1">
    <property type="nucleotide sequence ID" value="NM_007855.3"/>
</dbReference>
<dbReference type="SMR" id="Q9D030"/>
<dbReference type="BioGRID" id="199209">
    <property type="interactions" value="1"/>
</dbReference>
<dbReference type="FunCoup" id="Q9D030">
    <property type="interactions" value="1209"/>
</dbReference>
<dbReference type="IntAct" id="Q9D030">
    <property type="interactions" value="1"/>
</dbReference>
<dbReference type="STRING" id="10090.ENSMUSP00000139531"/>
<dbReference type="GlyGen" id="Q9D030">
    <property type="glycosylation" value="1 site"/>
</dbReference>
<dbReference type="iPTMnet" id="Q9D030"/>
<dbReference type="PhosphoSitePlus" id="Q9D030"/>
<dbReference type="jPOST" id="Q9D030"/>
<dbReference type="PaxDb" id="10090-ENSMUSP00000139531"/>
<dbReference type="ProteomicsDB" id="298068"/>
<dbReference type="Pumba" id="Q9D030"/>
<dbReference type="DNASU" id="13345"/>
<dbReference type="GeneID" id="13345"/>
<dbReference type="KEGG" id="mmu:13345"/>
<dbReference type="AGR" id="MGI:104685"/>
<dbReference type="CTD" id="117581"/>
<dbReference type="MGI" id="MGI:104685">
    <property type="gene designation" value="Twist2"/>
</dbReference>
<dbReference type="eggNOG" id="KOG4447">
    <property type="taxonomic scope" value="Eukaryota"/>
</dbReference>
<dbReference type="InParanoid" id="Q9D030"/>
<dbReference type="OrthoDB" id="8583783at2759"/>
<dbReference type="PhylomeDB" id="Q9D030"/>
<dbReference type="BioGRID-ORCS" id="13345">
    <property type="hits" value="3 hits in 76 CRISPR screens"/>
</dbReference>
<dbReference type="PRO" id="PR:Q9D030"/>
<dbReference type="Proteomes" id="UP000000589">
    <property type="component" value="Unplaced"/>
</dbReference>
<dbReference type="RNAct" id="Q9D030">
    <property type="molecule type" value="protein"/>
</dbReference>
<dbReference type="GO" id="GO:0005737">
    <property type="term" value="C:cytoplasm"/>
    <property type="evidence" value="ECO:0007669"/>
    <property type="project" value="UniProtKB-SubCell"/>
</dbReference>
<dbReference type="GO" id="GO:0005654">
    <property type="term" value="C:nucleoplasm"/>
    <property type="evidence" value="ECO:0000304"/>
    <property type="project" value="Reactome"/>
</dbReference>
<dbReference type="GO" id="GO:0005667">
    <property type="term" value="C:transcription regulator complex"/>
    <property type="evidence" value="ECO:0000353"/>
    <property type="project" value="MGI"/>
</dbReference>
<dbReference type="GO" id="GO:0003682">
    <property type="term" value="F:chromatin binding"/>
    <property type="evidence" value="ECO:0000314"/>
    <property type="project" value="MGI"/>
</dbReference>
<dbReference type="GO" id="GO:0003700">
    <property type="term" value="F:DNA-binding transcription factor activity"/>
    <property type="evidence" value="ECO:0000314"/>
    <property type="project" value="MGI"/>
</dbReference>
<dbReference type="GO" id="GO:0046983">
    <property type="term" value="F:protein dimerization activity"/>
    <property type="evidence" value="ECO:0007669"/>
    <property type="project" value="InterPro"/>
</dbReference>
<dbReference type="GO" id="GO:0019904">
    <property type="term" value="F:protein domain specific binding"/>
    <property type="evidence" value="ECO:0000353"/>
    <property type="project" value="MGI"/>
</dbReference>
<dbReference type="GO" id="GO:0000977">
    <property type="term" value="F:RNA polymerase II transcription regulatory region sequence-specific DNA binding"/>
    <property type="evidence" value="ECO:0007669"/>
    <property type="project" value="InterPro"/>
</dbReference>
<dbReference type="GO" id="GO:0008283">
    <property type="term" value="P:cell population proliferation"/>
    <property type="evidence" value="ECO:0000315"/>
    <property type="project" value="MGI"/>
</dbReference>
<dbReference type="GO" id="GO:0061303">
    <property type="term" value="P:cornea development in camera-type eye"/>
    <property type="evidence" value="ECO:0000315"/>
    <property type="project" value="MGI"/>
</dbReference>
<dbReference type="GO" id="GO:0048701">
    <property type="term" value="P:embryonic cranial skeleton morphogenesis"/>
    <property type="evidence" value="ECO:0000316"/>
    <property type="project" value="MGI"/>
</dbReference>
<dbReference type="GO" id="GO:0060325">
    <property type="term" value="P:face morphogenesis"/>
    <property type="evidence" value="ECO:0000315"/>
    <property type="project" value="MGI"/>
</dbReference>
<dbReference type="GO" id="GO:0043616">
    <property type="term" value="P:keratinocyte proliferation"/>
    <property type="evidence" value="ECO:0000315"/>
    <property type="project" value="MGI"/>
</dbReference>
<dbReference type="GO" id="GO:0030099">
    <property type="term" value="P:myeloid cell differentiation"/>
    <property type="evidence" value="ECO:0000315"/>
    <property type="project" value="MGI"/>
</dbReference>
<dbReference type="GO" id="GO:0008285">
    <property type="term" value="P:negative regulation of cell population proliferation"/>
    <property type="evidence" value="ECO:0000315"/>
    <property type="project" value="MGI"/>
</dbReference>
<dbReference type="GO" id="GO:0045892">
    <property type="term" value="P:negative regulation of DNA-templated transcription"/>
    <property type="evidence" value="ECO:0000314"/>
    <property type="project" value="UniProtKB"/>
</dbReference>
<dbReference type="GO" id="GO:0010936">
    <property type="term" value="P:negative regulation of macrophage cytokine production"/>
    <property type="evidence" value="ECO:0000315"/>
    <property type="project" value="MGI"/>
</dbReference>
<dbReference type="GO" id="GO:0045638">
    <property type="term" value="P:negative regulation of myeloid cell differentiation"/>
    <property type="evidence" value="ECO:0000315"/>
    <property type="project" value="MGI"/>
</dbReference>
<dbReference type="GO" id="GO:0045668">
    <property type="term" value="P:negative regulation of osteoblast differentiation"/>
    <property type="evidence" value="ECO:0000315"/>
    <property type="project" value="MGI"/>
</dbReference>
<dbReference type="GO" id="GO:0000122">
    <property type="term" value="P:negative regulation of transcription by RNA polymerase II"/>
    <property type="evidence" value="ECO:0000314"/>
    <property type="project" value="MGI"/>
</dbReference>
<dbReference type="GO" id="GO:0032720">
    <property type="term" value="P:negative regulation of tumor necrosis factor production"/>
    <property type="evidence" value="ECO:0000315"/>
    <property type="project" value="MGI"/>
</dbReference>
<dbReference type="GO" id="GO:0001649">
    <property type="term" value="P:osteoblast differentiation"/>
    <property type="evidence" value="ECO:0000315"/>
    <property type="project" value="MGI"/>
</dbReference>
<dbReference type="GO" id="GO:0010838">
    <property type="term" value="P:positive regulation of keratinocyte proliferation"/>
    <property type="evidence" value="ECO:0000315"/>
    <property type="project" value="MGI"/>
</dbReference>
<dbReference type="GO" id="GO:0006357">
    <property type="term" value="P:regulation of transcription by RNA polymerase II"/>
    <property type="evidence" value="ECO:0000314"/>
    <property type="project" value="MGI"/>
</dbReference>
<dbReference type="CDD" id="cd19700">
    <property type="entry name" value="bHLH_TS_TWIST2"/>
    <property type="match status" value="1"/>
</dbReference>
<dbReference type="FunFam" id="4.10.280.10:FF:000030">
    <property type="entry name" value="Twist transcription factor"/>
    <property type="match status" value="1"/>
</dbReference>
<dbReference type="Gene3D" id="4.10.280.10">
    <property type="entry name" value="Helix-loop-helix DNA-binding domain"/>
    <property type="match status" value="1"/>
</dbReference>
<dbReference type="InterPro" id="IPR011598">
    <property type="entry name" value="bHLH_dom"/>
</dbReference>
<dbReference type="InterPro" id="IPR050283">
    <property type="entry name" value="E-box_TF_Regulators"/>
</dbReference>
<dbReference type="InterPro" id="IPR036638">
    <property type="entry name" value="HLH_DNA-bd_sf"/>
</dbReference>
<dbReference type="InterPro" id="IPR047094">
    <property type="entry name" value="Twist2_bHLH"/>
</dbReference>
<dbReference type="PANTHER" id="PTHR23349">
    <property type="entry name" value="BASIC HELIX-LOOP-HELIX TRANSCRIPTION FACTOR, TWIST"/>
    <property type="match status" value="1"/>
</dbReference>
<dbReference type="PANTHER" id="PTHR23349:SF70">
    <property type="entry name" value="TWIST-RELATED PROTEIN 2"/>
    <property type="match status" value="1"/>
</dbReference>
<dbReference type="Pfam" id="PF00010">
    <property type="entry name" value="HLH"/>
    <property type="match status" value="1"/>
</dbReference>
<dbReference type="SMART" id="SM00353">
    <property type="entry name" value="HLH"/>
    <property type="match status" value="1"/>
</dbReference>
<dbReference type="SUPFAM" id="SSF47459">
    <property type="entry name" value="HLH, helix-loop-helix DNA-binding domain"/>
    <property type="match status" value="1"/>
</dbReference>
<dbReference type="PROSITE" id="PS50888">
    <property type="entry name" value="BHLH"/>
    <property type="match status" value="1"/>
</dbReference>
<organism evidence="8">
    <name type="scientific">Mus musculus</name>
    <name type="common">Mouse</name>
    <dbReference type="NCBI Taxonomy" id="10090"/>
    <lineage>
        <taxon>Eukaryota</taxon>
        <taxon>Metazoa</taxon>
        <taxon>Chordata</taxon>
        <taxon>Craniata</taxon>
        <taxon>Vertebrata</taxon>
        <taxon>Euteleostomi</taxon>
        <taxon>Mammalia</taxon>
        <taxon>Eutheria</taxon>
        <taxon>Euarchontoglires</taxon>
        <taxon>Glires</taxon>
        <taxon>Rodentia</taxon>
        <taxon>Myomorpha</taxon>
        <taxon>Muroidea</taxon>
        <taxon>Muridae</taxon>
        <taxon>Murinae</taxon>
        <taxon>Mus</taxon>
        <taxon>Mus</taxon>
    </lineage>
</organism>
<gene>
    <name type="primary">Twist2</name>
    <name type="synonym">Dermo1</name>
</gene>